<evidence type="ECO:0000250" key="1"/>
<evidence type="ECO:0000255" key="2"/>
<evidence type="ECO:0000256" key="3">
    <source>
        <dbReference type="SAM" id="MobiDB-lite"/>
    </source>
</evidence>
<evidence type="ECO:0000305" key="4"/>
<feature type="chain" id="PRO_0000085207" description="Galactose-3-O-sulfotransferase 3">
    <location>
        <begin position="1"/>
        <end position="431"/>
    </location>
</feature>
<feature type="topological domain" description="Cytoplasmic" evidence="2">
    <location>
        <begin position="1"/>
        <end position="19"/>
    </location>
</feature>
<feature type="transmembrane region" description="Helical; Signal-anchor for type II membrane protein" evidence="2">
    <location>
        <begin position="20"/>
        <end position="40"/>
    </location>
</feature>
<feature type="topological domain" description="Lumenal" evidence="2">
    <location>
        <begin position="41"/>
        <end position="431"/>
    </location>
</feature>
<feature type="region of interest" description="Disordered" evidence="3">
    <location>
        <begin position="400"/>
        <end position="431"/>
    </location>
</feature>
<feature type="compositionally biased region" description="Low complexity" evidence="3">
    <location>
        <begin position="421"/>
        <end position="431"/>
    </location>
</feature>
<feature type="glycosylation site" description="N-linked (GlcNAc...) asparagine" evidence="2">
    <location>
        <position position="91"/>
    </location>
</feature>
<feature type="glycosylation site" description="N-linked (GlcNAc...) asparagine" evidence="2">
    <location>
        <position position="110"/>
    </location>
</feature>
<feature type="glycosylation site" description="N-linked (GlcNAc...) asparagine" evidence="2">
    <location>
        <position position="177"/>
    </location>
</feature>
<feature type="glycosylation site" description="N-linked (GlcNAc...) asparagine" evidence="2">
    <location>
        <position position="302"/>
    </location>
</feature>
<gene>
    <name type="primary">Gal3st3</name>
</gene>
<accession>P61315</accession>
<proteinExistence type="evidence at transcript level"/>
<sequence>MPPILQRLQQSTKMMSHRKILLLVLGCSTVSLLIHQGSQLSWYPKLFPLSCPPLRESPPRAKHMAVAFLKTHKTAGTTVQNILFRFAERHNLTVALPHPSCEHQFCYPRNFSAHFVHPATRPPHMLASHLRFDRAELERLMPPDTIYVTILREPAAMFESLFSYYNQYCPAFRRVPNASLETFLRAPEAYYRPGEHFAMFAHNTLAYDLGGDNERSPRDDAAYLAGLIRQVEEVFSLVMIAEYFDESLVLLRRLLAWDLDDVLYAKLNARAASSRLATIPEALARAARTWNALDAGLYDHFNATFWRRVARAGRACVEREARELREARQRLLRRCFGDEPVLRPAAQIRTKQLQPWQPSRKVDIMGYDLPSGGAGPTTEACLKLAMPEVQYSNYLLRKQKRRGGVRSRPESVLDNPPPRPIRALPRIPQGT</sequence>
<name>G3ST3_MOUSE</name>
<organism>
    <name type="scientific">Mus musculus</name>
    <name type="common">Mouse</name>
    <dbReference type="NCBI Taxonomy" id="10090"/>
    <lineage>
        <taxon>Eukaryota</taxon>
        <taxon>Metazoa</taxon>
        <taxon>Chordata</taxon>
        <taxon>Craniata</taxon>
        <taxon>Vertebrata</taxon>
        <taxon>Euteleostomi</taxon>
        <taxon>Mammalia</taxon>
        <taxon>Eutheria</taxon>
        <taxon>Euarchontoglires</taxon>
        <taxon>Glires</taxon>
        <taxon>Rodentia</taxon>
        <taxon>Myomorpha</taxon>
        <taxon>Muroidea</taxon>
        <taxon>Muridae</taxon>
        <taxon>Murinae</taxon>
        <taxon>Mus</taxon>
        <taxon>Mus</taxon>
    </lineage>
</organism>
<dbReference type="EC" id="2.8.2.-"/>
<dbReference type="EMBL" id="BC066996">
    <property type="protein sequence ID" value="AAH66996.1"/>
    <property type="molecule type" value="mRNA"/>
</dbReference>
<dbReference type="CCDS" id="CCDS29455.1"/>
<dbReference type="RefSeq" id="NP_001019888.1">
    <property type="nucleotide sequence ID" value="NM_001024717.2"/>
</dbReference>
<dbReference type="STRING" id="10090.ENSMUSP00000061517"/>
<dbReference type="GlyConnect" id="2317">
    <property type="glycosylation" value="3 N-Linked glycans (3 sites)"/>
</dbReference>
<dbReference type="GlyCosmos" id="P61315">
    <property type="glycosylation" value="4 sites, 2 glycans"/>
</dbReference>
<dbReference type="GlyGen" id="P61315">
    <property type="glycosylation" value="5 sites, 4 N-linked glycans (3 sites)"/>
</dbReference>
<dbReference type="iPTMnet" id="P61315"/>
<dbReference type="PhosphoSitePlus" id="P61315"/>
<dbReference type="PaxDb" id="10090-ENSMUSP00000061517"/>
<dbReference type="ProteomicsDB" id="271625"/>
<dbReference type="Antibodypedia" id="2654">
    <property type="antibodies" value="44 antibodies from 15 providers"/>
</dbReference>
<dbReference type="Ensembl" id="ENSMUST00000061169.7">
    <property type="protein sequence ID" value="ENSMUSP00000061517.7"/>
    <property type="gene ID" value="ENSMUSG00000047658.7"/>
</dbReference>
<dbReference type="GeneID" id="545276"/>
<dbReference type="KEGG" id="mmu:545276"/>
<dbReference type="UCSC" id="uc008gco.2">
    <property type="organism name" value="mouse"/>
</dbReference>
<dbReference type="AGR" id="MGI:3617843"/>
<dbReference type="CTD" id="89792"/>
<dbReference type="MGI" id="MGI:3617843">
    <property type="gene designation" value="Gal3st3"/>
</dbReference>
<dbReference type="VEuPathDB" id="HostDB:ENSMUSG00000047658"/>
<dbReference type="eggNOG" id="ENOG502QPNT">
    <property type="taxonomic scope" value="Eukaryota"/>
</dbReference>
<dbReference type="GeneTree" id="ENSGT00950000182923"/>
<dbReference type="HOGENOM" id="CLU_040616_1_0_1"/>
<dbReference type="InParanoid" id="P61315"/>
<dbReference type="OMA" id="EEPWRYY"/>
<dbReference type="OrthoDB" id="514299at2759"/>
<dbReference type="PhylomeDB" id="P61315"/>
<dbReference type="TreeFam" id="TF314802"/>
<dbReference type="UniPathway" id="UPA00353"/>
<dbReference type="BioGRID-ORCS" id="545276">
    <property type="hits" value="1 hit in 77 CRISPR screens"/>
</dbReference>
<dbReference type="ChiTaRS" id="Gal3st3">
    <property type="organism name" value="mouse"/>
</dbReference>
<dbReference type="PRO" id="PR:P61315"/>
<dbReference type="Proteomes" id="UP000000589">
    <property type="component" value="Chromosome 19"/>
</dbReference>
<dbReference type="RNAct" id="P61315">
    <property type="molecule type" value="protein"/>
</dbReference>
<dbReference type="Bgee" id="ENSMUSG00000047658">
    <property type="expression patterns" value="Expressed in Ammon's horn and 40 other cell types or tissues"/>
</dbReference>
<dbReference type="GO" id="GO:0032580">
    <property type="term" value="C:Golgi cisterna membrane"/>
    <property type="evidence" value="ECO:0007669"/>
    <property type="project" value="UniProtKB-SubCell"/>
</dbReference>
<dbReference type="GO" id="GO:0001733">
    <property type="term" value="F:galactosylceramide sulfotransferase activity"/>
    <property type="evidence" value="ECO:0007669"/>
    <property type="project" value="InterPro"/>
</dbReference>
<dbReference type="GO" id="GO:0009247">
    <property type="term" value="P:glycolipid biosynthetic process"/>
    <property type="evidence" value="ECO:0007669"/>
    <property type="project" value="InterPro"/>
</dbReference>
<dbReference type="FunFam" id="3.40.50.300:FF:001285">
    <property type="entry name" value="galactose-3-O-sulfotransferase 3"/>
    <property type="match status" value="1"/>
</dbReference>
<dbReference type="Gene3D" id="3.40.50.300">
    <property type="entry name" value="P-loop containing nucleotide triphosphate hydrolases"/>
    <property type="match status" value="1"/>
</dbReference>
<dbReference type="InterPro" id="IPR009729">
    <property type="entry name" value="Gal-3-0_sulfotransfrase"/>
</dbReference>
<dbReference type="InterPro" id="IPR027417">
    <property type="entry name" value="P-loop_NTPase"/>
</dbReference>
<dbReference type="PANTHER" id="PTHR14647">
    <property type="entry name" value="GALACTOSE-3-O-SULFOTRANSFERASE"/>
    <property type="match status" value="1"/>
</dbReference>
<dbReference type="PANTHER" id="PTHR14647:SF83">
    <property type="entry name" value="GALACTOSE-3-O-SULFOTRANSFERASE 3"/>
    <property type="match status" value="1"/>
</dbReference>
<dbReference type="Pfam" id="PF06990">
    <property type="entry name" value="Gal-3-0_sulfotr"/>
    <property type="match status" value="1"/>
</dbReference>
<dbReference type="SUPFAM" id="SSF52540">
    <property type="entry name" value="P-loop containing nucleoside triphosphate hydrolases"/>
    <property type="match status" value="1"/>
</dbReference>
<protein>
    <recommendedName>
        <fullName>Galactose-3-O-sulfotransferase 3</fullName>
        <shortName>Gal3ST-3</shortName>
        <ecNumber>2.8.2.-</ecNumber>
    </recommendedName>
    <alternativeName>
        <fullName>Beta-galactose-3-O-sulfotransferase 3</fullName>
    </alternativeName>
    <alternativeName>
        <fullName>Gal-beta-1, 3-GalNAc 3'-sulfotransferase 3</fullName>
    </alternativeName>
</protein>
<reference key="1">
    <citation type="journal article" date="2004" name="Genome Res.">
        <title>The status, quality, and expansion of the NIH full-length cDNA project: the Mammalian Gene Collection (MGC).</title>
        <authorList>
            <consortium name="The MGC Project Team"/>
        </authorList>
    </citation>
    <scope>NUCLEOTIDE SEQUENCE [LARGE SCALE MRNA]</scope>
    <source>
        <strain>C57BL/6J</strain>
        <tissue>Brain</tissue>
    </source>
</reference>
<comment type="function">
    <text evidence="1">Transfers a sulfate to position 3 of non-reducing beta-galactosyl residues in N-glycans and core2-branched O-glycans. Has high activity towards Gal-beta-1,4-GlcNAc, Gal-beta-1,4(Fuc-alpha-1,3)GlcNAc and lower activity towards Gal-beta-1,3(Fuc-alpha-1,4)GlcNAc (By similarity).</text>
</comment>
<comment type="cofactor">
    <cofactor evidence="1">
        <name>Mg(2+)</name>
        <dbReference type="ChEBI" id="CHEBI:18420"/>
    </cofactor>
</comment>
<comment type="pathway">
    <text>Protein modification; carbohydrate sulfation.</text>
</comment>
<comment type="subcellular location">
    <subcellularLocation>
        <location evidence="4">Golgi apparatus</location>
        <location evidence="4">Golgi stack membrane</location>
        <topology evidence="4">Single-pass type II membrane protein</topology>
    </subcellularLocation>
</comment>
<comment type="similarity">
    <text evidence="4">Belongs to the galactose-3-O-sulfotransferase family.</text>
</comment>
<keyword id="KW-0325">Glycoprotein</keyword>
<keyword id="KW-0333">Golgi apparatus</keyword>
<keyword id="KW-0460">Magnesium</keyword>
<keyword id="KW-0472">Membrane</keyword>
<keyword id="KW-1185">Reference proteome</keyword>
<keyword id="KW-0735">Signal-anchor</keyword>
<keyword id="KW-0808">Transferase</keyword>
<keyword id="KW-0812">Transmembrane</keyword>
<keyword id="KW-1133">Transmembrane helix</keyword>